<feature type="chain" id="PRO_1000184535" description="ATP synthase subunit c">
    <location>
        <begin position="1"/>
        <end position="75"/>
    </location>
</feature>
<feature type="transmembrane region" description="Helical" evidence="1">
    <location>
        <begin position="8"/>
        <end position="28"/>
    </location>
</feature>
<feature type="transmembrane region" description="Helical" evidence="1">
    <location>
        <begin position="52"/>
        <end position="72"/>
    </location>
</feature>
<feature type="site" description="Reversibly protonated during proton transport" evidence="1">
    <location>
        <position position="58"/>
    </location>
</feature>
<reference key="1">
    <citation type="journal article" date="2008" name="Mol. Biol. Evol.">
        <title>Genome evolution of Wolbachia strain wPip from the Culex pipiens group.</title>
        <authorList>
            <person name="Klasson L."/>
            <person name="Walker T."/>
            <person name="Sebaihia M."/>
            <person name="Sanders M.J."/>
            <person name="Quail M.A."/>
            <person name="Lord A."/>
            <person name="Sanders S."/>
            <person name="Earl J."/>
            <person name="O'Neill S.L."/>
            <person name="Thomson N."/>
            <person name="Sinkins S.P."/>
            <person name="Parkhill J."/>
        </authorList>
    </citation>
    <scope>NUCLEOTIDE SEQUENCE [LARGE SCALE GENOMIC DNA]</scope>
    <source>
        <strain>wPip</strain>
    </source>
</reference>
<proteinExistence type="inferred from homology"/>
<dbReference type="EMBL" id="AM999887">
    <property type="protein sequence ID" value="CAQ54730.1"/>
    <property type="molecule type" value="Genomic_DNA"/>
</dbReference>
<dbReference type="RefSeq" id="WP_006014985.1">
    <property type="nucleotide sequence ID" value="NC_010981.1"/>
</dbReference>
<dbReference type="SMR" id="B3CLG2"/>
<dbReference type="KEGG" id="wpi:WP0622"/>
<dbReference type="eggNOG" id="COG0636">
    <property type="taxonomic scope" value="Bacteria"/>
</dbReference>
<dbReference type="HOGENOM" id="CLU_148047_4_0_5"/>
<dbReference type="Proteomes" id="UP000008814">
    <property type="component" value="Chromosome"/>
</dbReference>
<dbReference type="GO" id="GO:0005886">
    <property type="term" value="C:plasma membrane"/>
    <property type="evidence" value="ECO:0007669"/>
    <property type="project" value="UniProtKB-SubCell"/>
</dbReference>
<dbReference type="GO" id="GO:0045259">
    <property type="term" value="C:proton-transporting ATP synthase complex"/>
    <property type="evidence" value="ECO:0007669"/>
    <property type="project" value="UniProtKB-KW"/>
</dbReference>
<dbReference type="GO" id="GO:0033177">
    <property type="term" value="C:proton-transporting two-sector ATPase complex, proton-transporting domain"/>
    <property type="evidence" value="ECO:0007669"/>
    <property type="project" value="InterPro"/>
</dbReference>
<dbReference type="GO" id="GO:0008289">
    <property type="term" value="F:lipid binding"/>
    <property type="evidence" value="ECO:0007669"/>
    <property type="project" value="UniProtKB-KW"/>
</dbReference>
<dbReference type="GO" id="GO:0046933">
    <property type="term" value="F:proton-transporting ATP synthase activity, rotational mechanism"/>
    <property type="evidence" value="ECO:0007669"/>
    <property type="project" value="UniProtKB-UniRule"/>
</dbReference>
<dbReference type="CDD" id="cd18182">
    <property type="entry name" value="ATP-synt_Fo_c_ATP5G3"/>
    <property type="match status" value="1"/>
</dbReference>
<dbReference type="Gene3D" id="1.20.20.10">
    <property type="entry name" value="F1F0 ATP synthase subunit C"/>
    <property type="match status" value="1"/>
</dbReference>
<dbReference type="HAMAP" id="MF_01396">
    <property type="entry name" value="ATP_synth_c_bact"/>
    <property type="match status" value="1"/>
</dbReference>
<dbReference type="InterPro" id="IPR005953">
    <property type="entry name" value="ATP_synth_csu_bac/chlpt"/>
</dbReference>
<dbReference type="InterPro" id="IPR000454">
    <property type="entry name" value="ATP_synth_F0_csu"/>
</dbReference>
<dbReference type="InterPro" id="IPR020537">
    <property type="entry name" value="ATP_synth_F0_csu_DDCD_BS"/>
</dbReference>
<dbReference type="InterPro" id="IPR038662">
    <property type="entry name" value="ATP_synth_F0_csu_sf"/>
</dbReference>
<dbReference type="InterPro" id="IPR002379">
    <property type="entry name" value="ATPase_proteolipid_c-like_dom"/>
</dbReference>
<dbReference type="InterPro" id="IPR035921">
    <property type="entry name" value="F/V-ATP_Csub_sf"/>
</dbReference>
<dbReference type="NCBIfam" id="TIGR01260">
    <property type="entry name" value="ATP_synt_c"/>
    <property type="match status" value="1"/>
</dbReference>
<dbReference type="NCBIfam" id="NF005733">
    <property type="entry name" value="PRK07558.1"/>
    <property type="match status" value="1"/>
</dbReference>
<dbReference type="PANTHER" id="PTHR10031">
    <property type="entry name" value="ATP SYNTHASE LIPID-BINDING PROTEIN, MITOCHONDRIAL"/>
    <property type="match status" value="1"/>
</dbReference>
<dbReference type="PANTHER" id="PTHR10031:SF0">
    <property type="entry name" value="ATPASE PROTEIN 9"/>
    <property type="match status" value="1"/>
</dbReference>
<dbReference type="Pfam" id="PF00137">
    <property type="entry name" value="ATP-synt_C"/>
    <property type="match status" value="1"/>
</dbReference>
<dbReference type="PRINTS" id="PR00124">
    <property type="entry name" value="ATPASEC"/>
</dbReference>
<dbReference type="SUPFAM" id="SSF81333">
    <property type="entry name" value="F1F0 ATP synthase subunit C"/>
    <property type="match status" value="1"/>
</dbReference>
<dbReference type="PROSITE" id="PS00605">
    <property type="entry name" value="ATPASE_C"/>
    <property type="match status" value="1"/>
</dbReference>
<gene>
    <name evidence="1" type="primary">atpE</name>
    <name type="ordered locus">WP0622</name>
</gene>
<name>ATPL_WOLPP</name>
<accession>B3CLG2</accession>
<protein>
    <recommendedName>
        <fullName evidence="1">ATP synthase subunit c</fullName>
    </recommendedName>
    <alternativeName>
        <fullName evidence="1">ATP synthase F(0) sector subunit c</fullName>
    </alternativeName>
    <alternativeName>
        <fullName evidence="1">F-type ATPase subunit c</fullName>
        <shortName evidence="1">F-ATPase subunit c</shortName>
    </alternativeName>
    <alternativeName>
        <fullName evidence="1">Lipid-binding protein</fullName>
    </alternativeName>
</protein>
<keyword id="KW-0066">ATP synthesis</keyword>
<keyword id="KW-1003">Cell membrane</keyword>
<keyword id="KW-0138">CF(0)</keyword>
<keyword id="KW-0375">Hydrogen ion transport</keyword>
<keyword id="KW-0406">Ion transport</keyword>
<keyword id="KW-0446">Lipid-binding</keyword>
<keyword id="KW-0472">Membrane</keyword>
<keyword id="KW-0812">Transmembrane</keyword>
<keyword id="KW-1133">Transmembrane helix</keyword>
<keyword id="KW-0813">Transport</keyword>
<evidence type="ECO:0000255" key="1">
    <source>
        <dbReference type="HAMAP-Rule" id="MF_01396"/>
    </source>
</evidence>
<organism>
    <name type="scientific">Wolbachia pipientis subsp. Culex pipiens (strain wPip)</name>
    <dbReference type="NCBI Taxonomy" id="570417"/>
    <lineage>
        <taxon>Bacteria</taxon>
        <taxon>Pseudomonadati</taxon>
        <taxon>Pseudomonadota</taxon>
        <taxon>Alphaproteobacteria</taxon>
        <taxon>Rickettsiales</taxon>
        <taxon>Anaplasmataceae</taxon>
        <taxon>Wolbachieae</taxon>
        <taxon>Wolbachia</taxon>
    </lineage>
</organism>
<comment type="function">
    <text evidence="1">F(1)F(0) ATP synthase produces ATP from ADP in the presence of a proton or sodium gradient. F-type ATPases consist of two structural domains, F(1) containing the extramembraneous catalytic core and F(0) containing the membrane proton channel, linked together by a central stalk and a peripheral stalk. During catalysis, ATP synthesis in the catalytic domain of F(1) is coupled via a rotary mechanism of the central stalk subunits to proton translocation.</text>
</comment>
<comment type="function">
    <text evidence="1">Key component of the F(0) channel; it plays a direct role in translocation across the membrane. A homomeric c-ring of between 10-14 subunits forms the central stalk rotor element with the F(1) delta and epsilon subunits.</text>
</comment>
<comment type="subunit">
    <text evidence="1">F-type ATPases have 2 components, F(1) - the catalytic core - and F(0) - the membrane proton channel. F(1) has five subunits: alpha(3), beta(3), gamma(1), delta(1), epsilon(1). F(0) has three main subunits: a(1), b(2) and c(10-14). The alpha and beta chains form an alternating ring which encloses part of the gamma chain. F(1) is attached to F(0) by a central stalk formed by the gamma and epsilon chains, while a peripheral stalk is formed by the delta and b chains.</text>
</comment>
<comment type="subcellular location">
    <subcellularLocation>
        <location evidence="1">Cell membrane</location>
        <topology evidence="1">Multi-pass membrane protein</topology>
    </subcellularLocation>
</comment>
<comment type="similarity">
    <text evidence="1">Belongs to the ATPase C chain family.</text>
</comment>
<sequence length="75" mass="7826">MDLVALKFIAIGLAVFGMLGAGLGIANIFSAMLNGIARNPESEGKMKSYVYIGAAMVEIMGLLAFVLAMLLIFAA</sequence>